<gene>
    <name type="ordered locus">LEPBI_I0014</name>
</gene>
<protein>
    <recommendedName>
        <fullName evidence="1">dTTP/UTP pyrophosphatase</fullName>
        <shortName evidence="1">dTTPase/UTPase</shortName>
        <ecNumber evidence="1">3.6.1.9</ecNumber>
    </recommendedName>
    <alternativeName>
        <fullName evidence="1">Nucleoside triphosphate pyrophosphatase</fullName>
    </alternativeName>
    <alternativeName>
        <fullName evidence="1">Nucleotide pyrophosphatase</fullName>
        <shortName evidence="1">Nucleotide PPase</shortName>
    </alternativeName>
</protein>
<accession>B0SK44</accession>
<sequence length="191" mass="22348">MFVLKSASPRRKQILFDLGFDLKIDPEHIDESQKELESPLEYLERMVHSKLGTLFEPNNVYLAADTIVVYQNQILHKPIDTNDAFRILKILSGKNHSVFSGAALRHPNGTEYFYEETMIGFQNWNDFEINEYIKRSKPFDKAGSYGIQDKEGPVLQWIGSYTNVMGFPLRSFLSRHELWIGSWEERIMRRD</sequence>
<organism>
    <name type="scientific">Leptospira biflexa serovar Patoc (strain Patoc 1 / ATCC 23582 / Paris)</name>
    <dbReference type="NCBI Taxonomy" id="456481"/>
    <lineage>
        <taxon>Bacteria</taxon>
        <taxon>Pseudomonadati</taxon>
        <taxon>Spirochaetota</taxon>
        <taxon>Spirochaetia</taxon>
        <taxon>Leptospirales</taxon>
        <taxon>Leptospiraceae</taxon>
        <taxon>Leptospira</taxon>
    </lineage>
</organism>
<dbReference type="EC" id="3.6.1.9" evidence="1"/>
<dbReference type="EMBL" id="CP000786">
    <property type="protein sequence ID" value="ABZ96161.1"/>
    <property type="molecule type" value="Genomic_DNA"/>
</dbReference>
<dbReference type="RefSeq" id="WP_012387052.1">
    <property type="nucleotide sequence ID" value="NC_010602.1"/>
</dbReference>
<dbReference type="SMR" id="B0SK44"/>
<dbReference type="STRING" id="456481.LEPBI_I0014"/>
<dbReference type="KEGG" id="lbi:LEPBI_I0014"/>
<dbReference type="HOGENOM" id="CLU_040416_0_0_12"/>
<dbReference type="OrthoDB" id="9807767at2"/>
<dbReference type="BioCyc" id="LBIF456481:LEPBI_RS00085-MONOMER"/>
<dbReference type="Proteomes" id="UP000001847">
    <property type="component" value="Chromosome I"/>
</dbReference>
<dbReference type="GO" id="GO:0005737">
    <property type="term" value="C:cytoplasm"/>
    <property type="evidence" value="ECO:0007669"/>
    <property type="project" value="UniProtKB-SubCell"/>
</dbReference>
<dbReference type="GO" id="GO:0036218">
    <property type="term" value="F:dTTP diphosphatase activity"/>
    <property type="evidence" value="ECO:0007669"/>
    <property type="project" value="RHEA"/>
</dbReference>
<dbReference type="GO" id="GO:0036221">
    <property type="term" value="F:UTP diphosphatase activity"/>
    <property type="evidence" value="ECO:0007669"/>
    <property type="project" value="RHEA"/>
</dbReference>
<dbReference type="GO" id="GO:0009117">
    <property type="term" value="P:nucleotide metabolic process"/>
    <property type="evidence" value="ECO:0007669"/>
    <property type="project" value="UniProtKB-KW"/>
</dbReference>
<dbReference type="CDD" id="cd00555">
    <property type="entry name" value="Maf"/>
    <property type="match status" value="1"/>
</dbReference>
<dbReference type="Gene3D" id="3.90.950.10">
    <property type="match status" value="1"/>
</dbReference>
<dbReference type="HAMAP" id="MF_00528">
    <property type="entry name" value="Maf"/>
    <property type="match status" value="1"/>
</dbReference>
<dbReference type="InterPro" id="IPR029001">
    <property type="entry name" value="ITPase-like_fam"/>
</dbReference>
<dbReference type="InterPro" id="IPR003697">
    <property type="entry name" value="Maf-like"/>
</dbReference>
<dbReference type="NCBIfam" id="TIGR00172">
    <property type="entry name" value="maf"/>
    <property type="match status" value="1"/>
</dbReference>
<dbReference type="PANTHER" id="PTHR43213">
    <property type="entry name" value="BIFUNCTIONAL DTTP/UTP PYROPHOSPHATASE/METHYLTRANSFERASE PROTEIN-RELATED"/>
    <property type="match status" value="1"/>
</dbReference>
<dbReference type="PANTHER" id="PTHR43213:SF5">
    <property type="entry name" value="BIFUNCTIONAL DTTP_UTP PYROPHOSPHATASE_METHYLTRANSFERASE PROTEIN-RELATED"/>
    <property type="match status" value="1"/>
</dbReference>
<dbReference type="Pfam" id="PF02545">
    <property type="entry name" value="Maf"/>
    <property type="match status" value="1"/>
</dbReference>
<dbReference type="PIRSF" id="PIRSF006305">
    <property type="entry name" value="Maf"/>
    <property type="match status" value="1"/>
</dbReference>
<dbReference type="SUPFAM" id="SSF52972">
    <property type="entry name" value="ITPase-like"/>
    <property type="match status" value="1"/>
</dbReference>
<evidence type="ECO:0000255" key="1">
    <source>
        <dbReference type="HAMAP-Rule" id="MF_00528"/>
    </source>
</evidence>
<keyword id="KW-0963">Cytoplasm</keyword>
<keyword id="KW-0378">Hydrolase</keyword>
<keyword id="KW-0546">Nucleotide metabolism</keyword>
<keyword id="KW-1185">Reference proteome</keyword>
<proteinExistence type="inferred from homology"/>
<name>NTPPA_LEPBP</name>
<feature type="chain" id="PRO_1000127792" description="dTTP/UTP pyrophosphatase">
    <location>
        <begin position="1"/>
        <end position="191"/>
    </location>
</feature>
<feature type="active site" description="Proton acceptor" evidence="1">
    <location>
        <position position="65"/>
    </location>
</feature>
<feature type="site" description="Important for substrate specificity" evidence="1">
    <location>
        <position position="10"/>
    </location>
</feature>
<feature type="site" description="Important for substrate specificity" evidence="1">
    <location>
        <position position="66"/>
    </location>
</feature>
<feature type="site" description="Important for substrate specificity" evidence="1">
    <location>
        <position position="148"/>
    </location>
</feature>
<reference key="1">
    <citation type="journal article" date="2008" name="PLoS ONE">
        <title>Genome sequence of the saprophyte Leptospira biflexa provides insights into the evolution of Leptospira and the pathogenesis of leptospirosis.</title>
        <authorList>
            <person name="Picardeau M."/>
            <person name="Bulach D.M."/>
            <person name="Bouchier C."/>
            <person name="Zuerner R.L."/>
            <person name="Zidane N."/>
            <person name="Wilson P.J."/>
            <person name="Creno S."/>
            <person name="Kuczek E.S."/>
            <person name="Bommezzadri S."/>
            <person name="Davis J.C."/>
            <person name="McGrath A."/>
            <person name="Johnson M.J."/>
            <person name="Boursaux-Eude C."/>
            <person name="Seemann T."/>
            <person name="Rouy Z."/>
            <person name="Coppel R.L."/>
            <person name="Rood J.I."/>
            <person name="Lajus A."/>
            <person name="Davies J.K."/>
            <person name="Medigue C."/>
            <person name="Adler B."/>
        </authorList>
    </citation>
    <scope>NUCLEOTIDE SEQUENCE [LARGE SCALE GENOMIC DNA]</scope>
    <source>
        <strain>Patoc 1 / ATCC 23582 / Paris</strain>
    </source>
</reference>
<comment type="function">
    <text evidence="1">Nucleoside triphosphate pyrophosphatase that hydrolyzes dTTP and UTP. May have a dual role in cell division arrest and in preventing the incorporation of modified nucleotides into cellular nucleic acids.</text>
</comment>
<comment type="catalytic activity">
    <reaction evidence="1">
        <text>dTTP + H2O = dTMP + diphosphate + H(+)</text>
        <dbReference type="Rhea" id="RHEA:28534"/>
        <dbReference type="ChEBI" id="CHEBI:15377"/>
        <dbReference type="ChEBI" id="CHEBI:15378"/>
        <dbReference type="ChEBI" id="CHEBI:33019"/>
        <dbReference type="ChEBI" id="CHEBI:37568"/>
        <dbReference type="ChEBI" id="CHEBI:63528"/>
        <dbReference type="EC" id="3.6.1.9"/>
    </reaction>
</comment>
<comment type="catalytic activity">
    <reaction evidence="1">
        <text>UTP + H2O = UMP + diphosphate + H(+)</text>
        <dbReference type="Rhea" id="RHEA:29395"/>
        <dbReference type="ChEBI" id="CHEBI:15377"/>
        <dbReference type="ChEBI" id="CHEBI:15378"/>
        <dbReference type="ChEBI" id="CHEBI:33019"/>
        <dbReference type="ChEBI" id="CHEBI:46398"/>
        <dbReference type="ChEBI" id="CHEBI:57865"/>
        <dbReference type="EC" id="3.6.1.9"/>
    </reaction>
</comment>
<comment type="cofactor">
    <cofactor evidence="1">
        <name>a divalent metal cation</name>
        <dbReference type="ChEBI" id="CHEBI:60240"/>
    </cofactor>
</comment>
<comment type="subcellular location">
    <subcellularLocation>
        <location evidence="1">Cytoplasm</location>
    </subcellularLocation>
</comment>
<comment type="similarity">
    <text evidence="1">Belongs to the Maf family. YhdE subfamily.</text>
</comment>